<organism>
    <name type="scientific">Marchantia polymorpha</name>
    <name type="common">Common liverwort</name>
    <name type="synonym">Marchantia aquatica</name>
    <dbReference type="NCBI Taxonomy" id="3197"/>
    <lineage>
        <taxon>Eukaryota</taxon>
        <taxon>Viridiplantae</taxon>
        <taxon>Streptophyta</taxon>
        <taxon>Embryophyta</taxon>
        <taxon>Marchantiophyta</taxon>
        <taxon>Marchantiopsida</taxon>
        <taxon>Marchantiidae</taxon>
        <taxon>Marchantiales</taxon>
        <taxon>Marchantiaceae</taxon>
        <taxon>Marchantia</taxon>
    </lineage>
</organism>
<keyword id="KW-0249">Electron transport</keyword>
<keyword id="KW-0349">Heme</keyword>
<keyword id="KW-0408">Iron</keyword>
<keyword id="KW-0472">Membrane</keyword>
<keyword id="KW-0479">Metal-binding</keyword>
<keyword id="KW-0496">Mitochondrion</keyword>
<keyword id="KW-0999">Mitochondrion inner membrane</keyword>
<keyword id="KW-0812">Transmembrane</keyword>
<keyword id="KW-1133">Transmembrane helix</keyword>
<keyword id="KW-0813">Transport</keyword>
<keyword id="KW-0816">Tricarboxylic acid cycle</keyword>
<proteinExistence type="inferred from homology"/>
<evidence type="ECO:0000250" key="1"/>
<evidence type="ECO:0000255" key="2"/>
<evidence type="ECO:0000305" key="3"/>
<comment type="function">
    <text evidence="1">Membrane-anchoring subunit of succinate dehydrogenase (SDH) that is involved in complex II of the mitochondrial electron transport chain and is responsible for transferring electrons from succinate to ubiquinone (coenzyme Q).</text>
</comment>
<comment type="cofactor">
    <cofactor evidence="1">
        <name>heme</name>
        <dbReference type="ChEBI" id="CHEBI:30413"/>
    </cofactor>
    <text evidence="1">The heme is bound between the two transmembrane subunits.</text>
</comment>
<comment type="pathway">
    <text>Carbohydrate metabolism; tricarboxylic acid cycle.</text>
</comment>
<comment type="subunit">
    <text>Forms part of complex II containing four subunits: a 70 kDa flavoprotein (FP), a 27 kDa iron-sulfur protein (IP), a cytochrome B and a membrane-anchoring protein.</text>
</comment>
<comment type="subcellular location">
    <subcellularLocation>
        <location evidence="1">Mitochondrion inner membrane</location>
        <topology evidence="1">Multi-pass membrane protein</topology>
    </subcellularLocation>
</comment>
<comment type="similarity">
    <text evidence="3">Belongs to the cytochrome b560 family.</text>
</comment>
<gene>
    <name type="primary">SDH3</name>
    <name type="synonym">SDHC</name>
    <name type="synonym">YMF24</name>
</gene>
<name>C560_MARPO</name>
<protein>
    <recommendedName>
        <fullName>Succinate dehydrogenase cytochrome b560 subunit</fullName>
    </recommendedName>
    <alternativeName>
        <fullName>Succinate dehydrogenase, subunit III</fullName>
    </alternativeName>
</protein>
<reference key="1">
    <citation type="journal article" date="1992" name="J. Mol. Biol.">
        <title>Gene organization deduced from the complete sequence of liverwort Marchantia polymorpha mitochondrial DNA. A primitive form of plant mitochondrial genome.</title>
        <authorList>
            <person name="Oda K."/>
            <person name="Yamato K."/>
            <person name="Ohta E."/>
            <person name="Nakamura Y."/>
            <person name="Takemura M."/>
            <person name="Nozato N."/>
            <person name="Akashi K."/>
            <person name="Kanegae T."/>
            <person name="Ogura Y."/>
            <person name="Kohchi T."/>
            <person name="Ohyama K."/>
        </authorList>
    </citation>
    <scope>NUCLEOTIDE SEQUENCE [GENOMIC DNA]</scope>
</reference>
<sequence length="137" mass="16173">MKINRPLSPHLTIYKPQLTSTFSIFHRISGAFLATMVLFSILFFKIGDLSLTFYHFYQYFFFLTFYLNWFIISLVNFTLLALCYHMSNGVRHLLWDLGFFLELSKVYTSGIIMLFCAAFLALLNIIRQHWSNGQIPY</sequence>
<feature type="chain" id="PRO_0000203519" description="Succinate dehydrogenase cytochrome b560 subunit">
    <location>
        <begin position="1"/>
        <end position="137"/>
    </location>
</feature>
<feature type="transmembrane region" description="Helical" evidence="2">
    <location>
        <begin position="31"/>
        <end position="51"/>
    </location>
</feature>
<feature type="transmembrane region" description="Helical" evidence="2">
    <location>
        <begin position="60"/>
        <end position="80"/>
    </location>
</feature>
<feature type="transmembrane region" description="Helical" evidence="2">
    <location>
        <begin position="106"/>
        <end position="126"/>
    </location>
</feature>
<feature type="binding site" description="axial binding residue" evidence="1">
    <location>
        <position position="85"/>
    </location>
    <ligand>
        <name>heme</name>
        <dbReference type="ChEBI" id="CHEBI:30413"/>
        <note>ligand shared with second transmembrane subunit</note>
    </ligand>
    <ligandPart>
        <name>Fe</name>
        <dbReference type="ChEBI" id="CHEBI:18248"/>
    </ligandPart>
</feature>
<accession>P35721</accession>
<geneLocation type="mitochondrion"/>
<dbReference type="EMBL" id="M68929">
    <property type="protein sequence ID" value="AAC09406.1"/>
    <property type="molecule type" value="Genomic_DNA"/>
</dbReference>
<dbReference type="PIR" id="S25968">
    <property type="entry name" value="S25968"/>
</dbReference>
<dbReference type="RefSeq" id="NP_054409.1">
    <property type="nucleotide sequence ID" value="NC_001660.1"/>
</dbReference>
<dbReference type="SMR" id="P35721"/>
<dbReference type="GeneID" id="2948414"/>
<dbReference type="UniPathway" id="UPA00223"/>
<dbReference type="GO" id="GO:0005743">
    <property type="term" value="C:mitochondrial inner membrane"/>
    <property type="evidence" value="ECO:0007669"/>
    <property type="project" value="UniProtKB-SubCell"/>
</dbReference>
<dbReference type="GO" id="GO:0009055">
    <property type="term" value="F:electron transfer activity"/>
    <property type="evidence" value="ECO:0007669"/>
    <property type="project" value="InterPro"/>
</dbReference>
<dbReference type="GO" id="GO:0046872">
    <property type="term" value="F:metal ion binding"/>
    <property type="evidence" value="ECO:0007669"/>
    <property type="project" value="UniProtKB-KW"/>
</dbReference>
<dbReference type="GO" id="GO:0006099">
    <property type="term" value="P:tricarboxylic acid cycle"/>
    <property type="evidence" value="ECO:0007669"/>
    <property type="project" value="UniProtKB-UniPathway"/>
</dbReference>
<dbReference type="CDD" id="cd03499">
    <property type="entry name" value="SQR_TypeC_SdhC"/>
    <property type="match status" value="1"/>
</dbReference>
<dbReference type="Gene3D" id="1.20.1300.10">
    <property type="entry name" value="Fumarate reductase/succinate dehydrogenase, transmembrane subunit"/>
    <property type="match status" value="1"/>
</dbReference>
<dbReference type="InterPro" id="IPR034804">
    <property type="entry name" value="SQR/QFR_C/D"/>
</dbReference>
<dbReference type="InterPro" id="IPR018495">
    <property type="entry name" value="Succ_DH_cyt_bsu_CS"/>
</dbReference>
<dbReference type="InterPro" id="IPR014314">
    <property type="entry name" value="Succ_DH_cytb556"/>
</dbReference>
<dbReference type="InterPro" id="IPR000701">
    <property type="entry name" value="SuccDH_FuR_B_TM-su"/>
</dbReference>
<dbReference type="NCBIfam" id="TIGR02970">
    <property type="entry name" value="succ_dehyd_cytB"/>
    <property type="match status" value="1"/>
</dbReference>
<dbReference type="PANTHER" id="PTHR10978">
    <property type="entry name" value="SUCCINATE DEHYDROGENASE CYTOCHROME B560 SUBUNIT"/>
    <property type="match status" value="1"/>
</dbReference>
<dbReference type="PANTHER" id="PTHR10978:SF5">
    <property type="entry name" value="SUCCINATE DEHYDROGENASE CYTOCHROME B560 SUBUNIT, MITOCHONDRIAL"/>
    <property type="match status" value="1"/>
</dbReference>
<dbReference type="Pfam" id="PF01127">
    <property type="entry name" value="Sdh_cyt"/>
    <property type="match status" value="1"/>
</dbReference>
<dbReference type="PIRSF" id="PIRSF000178">
    <property type="entry name" value="SDH_cyt_b560"/>
    <property type="match status" value="1"/>
</dbReference>
<dbReference type="SUPFAM" id="SSF81343">
    <property type="entry name" value="Fumarate reductase respiratory complex transmembrane subunits"/>
    <property type="match status" value="1"/>
</dbReference>
<dbReference type="PROSITE" id="PS01000">
    <property type="entry name" value="SDH_CYT_1"/>
    <property type="match status" value="1"/>
</dbReference>
<dbReference type="PROSITE" id="PS01001">
    <property type="entry name" value="SDH_CYT_2"/>
    <property type="match status" value="1"/>
</dbReference>